<reference key="1">
    <citation type="journal article" date="1996" name="Microbiology">
        <title>Systematic sequencing of the 283 kb 210 degrees-232 degrees region of the Bacillus subtilis genome containing the skin element and many sporulation genes.</title>
        <authorList>
            <person name="Mizuno M."/>
            <person name="Masuda S."/>
            <person name="Takemaru K."/>
            <person name="Hosono S."/>
            <person name="Sato T."/>
            <person name="Takeuchi M."/>
            <person name="Kobayashi Y."/>
        </authorList>
    </citation>
    <scope>NUCLEOTIDE SEQUENCE [GENOMIC DNA]</scope>
    <source>
        <strain>168 / JH642</strain>
    </source>
</reference>
<reference key="2">
    <citation type="journal article" date="1997" name="Nature">
        <title>The complete genome sequence of the Gram-positive bacterium Bacillus subtilis.</title>
        <authorList>
            <person name="Kunst F."/>
            <person name="Ogasawara N."/>
            <person name="Moszer I."/>
            <person name="Albertini A.M."/>
            <person name="Alloni G."/>
            <person name="Azevedo V."/>
            <person name="Bertero M.G."/>
            <person name="Bessieres P."/>
            <person name="Bolotin A."/>
            <person name="Borchert S."/>
            <person name="Borriss R."/>
            <person name="Boursier L."/>
            <person name="Brans A."/>
            <person name="Braun M."/>
            <person name="Brignell S.C."/>
            <person name="Bron S."/>
            <person name="Brouillet S."/>
            <person name="Bruschi C.V."/>
            <person name="Caldwell B."/>
            <person name="Capuano V."/>
            <person name="Carter N.M."/>
            <person name="Choi S.-K."/>
            <person name="Codani J.-J."/>
            <person name="Connerton I.F."/>
            <person name="Cummings N.J."/>
            <person name="Daniel R.A."/>
            <person name="Denizot F."/>
            <person name="Devine K.M."/>
            <person name="Duesterhoeft A."/>
            <person name="Ehrlich S.D."/>
            <person name="Emmerson P.T."/>
            <person name="Entian K.-D."/>
            <person name="Errington J."/>
            <person name="Fabret C."/>
            <person name="Ferrari E."/>
            <person name="Foulger D."/>
            <person name="Fritz C."/>
            <person name="Fujita M."/>
            <person name="Fujita Y."/>
            <person name="Fuma S."/>
            <person name="Galizzi A."/>
            <person name="Galleron N."/>
            <person name="Ghim S.-Y."/>
            <person name="Glaser P."/>
            <person name="Goffeau A."/>
            <person name="Golightly E.J."/>
            <person name="Grandi G."/>
            <person name="Guiseppi G."/>
            <person name="Guy B.J."/>
            <person name="Haga K."/>
            <person name="Haiech J."/>
            <person name="Harwood C.R."/>
            <person name="Henaut A."/>
            <person name="Hilbert H."/>
            <person name="Holsappel S."/>
            <person name="Hosono S."/>
            <person name="Hullo M.-F."/>
            <person name="Itaya M."/>
            <person name="Jones L.-M."/>
            <person name="Joris B."/>
            <person name="Karamata D."/>
            <person name="Kasahara Y."/>
            <person name="Klaerr-Blanchard M."/>
            <person name="Klein C."/>
            <person name="Kobayashi Y."/>
            <person name="Koetter P."/>
            <person name="Koningstein G."/>
            <person name="Krogh S."/>
            <person name="Kumano M."/>
            <person name="Kurita K."/>
            <person name="Lapidus A."/>
            <person name="Lardinois S."/>
            <person name="Lauber J."/>
            <person name="Lazarevic V."/>
            <person name="Lee S.-M."/>
            <person name="Levine A."/>
            <person name="Liu H."/>
            <person name="Masuda S."/>
            <person name="Mauel C."/>
            <person name="Medigue C."/>
            <person name="Medina N."/>
            <person name="Mellado R.P."/>
            <person name="Mizuno M."/>
            <person name="Moestl D."/>
            <person name="Nakai S."/>
            <person name="Noback M."/>
            <person name="Noone D."/>
            <person name="O'Reilly M."/>
            <person name="Ogawa K."/>
            <person name="Ogiwara A."/>
            <person name="Oudega B."/>
            <person name="Park S.-H."/>
            <person name="Parro V."/>
            <person name="Pohl T.M."/>
            <person name="Portetelle D."/>
            <person name="Porwollik S."/>
            <person name="Prescott A.M."/>
            <person name="Presecan E."/>
            <person name="Pujic P."/>
            <person name="Purnelle B."/>
            <person name="Rapoport G."/>
            <person name="Rey M."/>
            <person name="Reynolds S."/>
            <person name="Rieger M."/>
            <person name="Rivolta C."/>
            <person name="Rocha E."/>
            <person name="Roche B."/>
            <person name="Rose M."/>
            <person name="Sadaie Y."/>
            <person name="Sato T."/>
            <person name="Scanlan E."/>
            <person name="Schleich S."/>
            <person name="Schroeter R."/>
            <person name="Scoffone F."/>
            <person name="Sekiguchi J."/>
            <person name="Sekowska A."/>
            <person name="Seror S.J."/>
            <person name="Serror P."/>
            <person name="Shin B.-S."/>
            <person name="Soldo B."/>
            <person name="Sorokin A."/>
            <person name="Tacconi E."/>
            <person name="Takagi T."/>
            <person name="Takahashi H."/>
            <person name="Takemaru K."/>
            <person name="Takeuchi M."/>
            <person name="Tamakoshi A."/>
            <person name="Tanaka T."/>
            <person name="Terpstra P."/>
            <person name="Tognoni A."/>
            <person name="Tosato V."/>
            <person name="Uchiyama S."/>
            <person name="Vandenbol M."/>
            <person name="Vannier F."/>
            <person name="Vassarotti A."/>
            <person name="Viari A."/>
            <person name="Wambutt R."/>
            <person name="Wedler E."/>
            <person name="Wedler H."/>
            <person name="Weitzenegger T."/>
            <person name="Winters P."/>
            <person name="Wipat A."/>
            <person name="Yamamoto H."/>
            <person name="Yamane K."/>
            <person name="Yasumoto K."/>
            <person name="Yata K."/>
            <person name="Yoshida K."/>
            <person name="Yoshikawa H.-F."/>
            <person name="Zumstein E."/>
            <person name="Yoshikawa H."/>
            <person name="Danchin A."/>
        </authorList>
    </citation>
    <scope>NUCLEOTIDE SEQUENCE [LARGE SCALE GENOMIC DNA]</scope>
    <source>
        <strain>168</strain>
    </source>
</reference>
<reference key="3">
    <citation type="journal article" date="2002" name="Proc. Natl. Acad. Sci. U.S.A.">
        <title>An expanded view of bacterial DNA replication.</title>
        <authorList>
            <person name="Noirot-Gros M.-F."/>
            <person name="Dervyn E."/>
            <person name="Wu L.J."/>
            <person name="Mervelet P."/>
            <person name="Errington J."/>
            <person name="Ehrlich S.D."/>
            <person name="Noirot P."/>
        </authorList>
    </citation>
    <scope>DISRUPTION PHENOTYPE</scope>
    <source>
        <strain>168</strain>
    </source>
</reference>
<reference key="4">
    <citation type="journal article" date="2010" name="PLoS Genet.">
        <title>The C-terminal domain of the bacterial SSB protein acts as a DNA maintenance hub at active chromosome replication forks.</title>
        <authorList>
            <person name="Costes A."/>
            <person name="Lecointe F."/>
            <person name="McGovern S."/>
            <person name="Quevillon-Cheruel S."/>
            <person name="Polard P."/>
        </authorList>
    </citation>
    <scope>SUBCELLULAR LOCATION</scope>
    <source>
        <strain>168</strain>
    </source>
</reference>
<reference evidence="10" key="5">
    <citation type="journal article" date="2013" name="Nucleic Acids Res.">
        <title>Insights into the structure and assembly of the Bacillus subtilis clamp-loader complex and its interaction with the replicative helicase.</title>
        <authorList>
            <person name="Afonso J.P."/>
            <person name="Chintakayala K."/>
            <person name="Suwannachart C."/>
            <person name="Sedelnikova S."/>
            <person name="Giles K."/>
            <person name="Hoyes J.B."/>
            <person name="Soultanas P."/>
            <person name="Rafferty J.B."/>
            <person name="Oldham N.J."/>
        </authorList>
    </citation>
    <scope>X-RAY CRYSTALLOGRAPHY (2.10 ANGSTROMS)</scope>
    <scope>SUBUNIT</scope>
</reference>
<organism>
    <name type="scientific">Bacillus subtilis (strain 168)</name>
    <dbReference type="NCBI Taxonomy" id="224308"/>
    <lineage>
        <taxon>Bacteria</taxon>
        <taxon>Bacillati</taxon>
        <taxon>Bacillota</taxon>
        <taxon>Bacilli</taxon>
        <taxon>Bacillales</taxon>
        <taxon>Bacillaceae</taxon>
        <taxon>Bacillus</taxon>
    </lineage>
</organism>
<sequence>MVFDVWKSLKKGEVHPVYCLYGKETYLLQETVSRIRQTVVDQETKDFNLSVFDLEEDPLDQAIADAETFPFMGERRLVIVKNPYFLTGEKKKEKIEHNVSALESYIQSPAPYTVFVLLAPYEKLDERKKLTKALKKHAFMMEAKELNAKETTDFTVNLAKTEQKTIGTEAAEHLVLLVNGHLSSIFQEIQKLCTFIGDREEITLDDVKMLVARSLEQNIFELINKIVNRKRTESLQIFYDLLKQNEEPIKIMALISNQFRLILQTKYFAEQGYGQKQIASNLKVHPFRVKLAMDQARLFSEEELRLIIEQLAVMDYEMKTGKKDKQLLLELFLLQLLKRNEKNDPHY</sequence>
<evidence type="ECO:0000250" key="1">
    <source>
        <dbReference type="UniProtKB" id="P28630"/>
    </source>
</evidence>
<evidence type="ECO:0000269" key="2">
    <source>
    </source>
</evidence>
<evidence type="ECO:0000269" key="3">
    <source>
    </source>
</evidence>
<evidence type="ECO:0000269" key="4">
    <source>
    </source>
</evidence>
<evidence type="ECO:0000303" key="5">
    <source>
    </source>
</evidence>
<evidence type="ECO:0000303" key="6">
    <source>
    </source>
</evidence>
<evidence type="ECO:0000303" key="7">
    <source>
    </source>
</evidence>
<evidence type="ECO:0000303" key="8">
    <source>
    </source>
</evidence>
<evidence type="ECO:0000305" key="9"/>
<evidence type="ECO:0007744" key="10">
    <source>
        <dbReference type="PDB" id="3ZH9"/>
    </source>
</evidence>
<evidence type="ECO:0007829" key="11">
    <source>
        <dbReference type="PDB" id="3ZH9"/>
    </source>
</evidence>
<dbReference type="EC" id="2.7.7.7"/>
<dbReference type="EMBL" id="D84432">
    <property type="protein sequence ID" value="BAA12455.1"/>
    <property type="molecule type" value="Genomic_DNA"/>
</dbReference>
<dbReference type="EMBL" id="AL009126">
    <property type="protein sequence ID" value="CAB14498.1"/>
    <property type="molecule type" value="Genomic_DNA"/>
</dbReference>
<dbReference type="PIR" id="B69952">
    <property type="entry name" value="B69952"/>
</dbReference>
<dbReference type="RefSeq" id="NP_390434.1">
    <property type="nucleotide sequence ID" value="NC_000964.3"/>
</dbReference>
<dbReference type="RefSeq" id="WP_003229987.1">
    <property type="nucleotide sequence ID" value="NZ_OZ025638.1"/>
</dbReference>
<dbReference type="PDB" id="3ZH9">
    <property type="method" value="X-ray"/>
    <property type="resolution" value="2.10 A"/>
    <property type="chains" value="B=1-347"/>
</dbReference>
<dbReference type="PDBsum" id="3ZH9"/>
<dbReference type="SMR" id="P54459"/>
<dbReference type="FunCoup" id="P54459">
    <property type="interactions" value="128"/>
</dbReference>
<dbReference type="IntAct" id="P54459">
    <property type="interactions" value="8"/>
</dbReference>
<dbReference type="STRING" id="224308.BSU25560"/>
<dbReference type="PaxDb" id="224308-BSU25560"/>
<dbReference type="EnsemblBacteria" id="CAB14498">
    <property type="protein sequence ID" value="CAB14498"/>
    <property type="gene ID" value="BSU_25560"/>
</dbReference>
<dbReference type="GeneID" id="937833"/>
<dbReference type="KEGG" id="bsu:BSU25560"/>
<dbReference type="PATRIC" id="fig|224308.179.peg.2777"/>
<dbReference type="eggNOG" id="COG1466">
    <property type="taxonomic scope" value="Bacteria"/>
</dbReference>
<dbReference type="InParanoid" id="P54459"/>
<dbReference type="OrthoDB" id="9775929at2"/>
<dbReference type="PhylomeDB" id="P54459"/>
<dbReference type="BioCyc" id="BSUB:BSU25560-MONOMER"/>
<dbReference type="EvolutionaryTrace" id="P54459"/>
<dbReference type="Proteomes" id="UP000001570">
    <property type="component" value="Chromosome"/>
</dbReference>
<dbReference type="GO" id="GO:0005737">
    <property type="term" value="C:cytoplasm"/>
    <property type="evidence" value="ECO:0007669"/>
    <property type="project" value="UniProtKB-KW"/>
</dbReference>
<dbReference type="GO" id="GO:0009360">
    <property type="term" value="C:DNA polymerase III complex"/>
    <property type="evidence" value="ECO:0000318"/>
    <property type="project" value="GO_Central"/>
</dbReference>
<dbReference type="GO" id="GO:0009295">
    <property type="term" value="C:nucleoid"/>
    <property type="evidence" value="ECO:0007669"/>
    <property type="project" value="UniProtKB-SubCell"/>
</dbReference>
<dbReference type="GO" id="GO:0003677">
    <property type="term" value="F:DNA binding"/>
    <property type="evidence" value="ECO:0007669"/>
    <property type="project" value="InterPro"/>
</dbReference>
<dbReference type="GO" id="GO:0003887">
    <property type="term" value="F:DNA-directed DNA polymerase activity"/>
    <property type="evidence" value="ECO:0007669"/>
    <property type="project" value="UniProtKB-KW"/>
</dbReference>
<dbReference type="GO" id="GO:0006261">
    <property type="term" value="P:DNA-templated DNA replication"/>
    <property type="evidence" value="ECO:0000318"/>
    <property type="project" value="GO_Central"/>
</dbReference>
<dbReference type="Gene3D" id="1.10.8.60">
    <property type="match status" value="1"/>
</dbReference>
<dbReference type="Gene3D" id="1.20.272.10">
    <property type="match status" value="1"/>
</dbReference>
<dbReference type="Gene3D" id="3.40.50.300">
    <property type="entry name" value="P-loop containing nucleotide triphosphate hydrolases"/>
    <property type="match status" value="1"/>
</dbReference>
<dbReference type="InterPro" id="IPR008921">
    <property type="entry name" value="DNA_pol3_clamp-load_cplx_C"/>
</dbReference>
<dbReference type="InterPro" id="IPR048466">
    <property type="entry name" value="DNA_pol3_delta-like_C"/>
</dbReference>
<dbReference type="InterPro" id="IPR010372">
    <property type="entry name" value="DNA_pol3_delta_N"/>
</dbReference>
<dbReference type="InterPro" id="IPR005790">
    <property type="entry name" value="DNA_polIII_delta"/>
</dbReference>
<dbReference type="InterPro" id="IPR027417">
    <property type="entry name" value="P-loop_NTPase"/>
</dbReference>
<dbReference type="NCBIfam" id="TIGR01128">
    <property type="entry name" value="holA"/>
    <property type="match status" value="1"/>
</dbReference>
<dbReference type="PANTHER" id="PTHR34388">
    <property type="entry name" value="DNA POLYMERASE III SUBUNIT DELTA"/>
    <property type="match status" value="1"/>
</dbReference>
<dbReference type="PANTHER" id="PTHR34388:SF1">
    <property type="entry name" value="DNA POLYMERASE III SUBUNIT DELTA"/>
    <property type="match status" value="1"/>
</dbReference>
<dbReference type="Pfam" id="PF06144">
    <property type="entry name" value="DNA_pol3_delta"/>
    <property type="match status" value="1"/>
</dbReference>
<dbReference type="Pfam" id="PF21694">
    <property type="entry name" value="DNA_pol3_delta_C"/>
    <property type="match status" value="1"/>
</dbReference>
<dbReference type="SUPFAM" id="SSF52540">
    <property type="entry name" value="P-loop containing nucleoside triphosphate hydrolases"/>
    <property type="match status" value="1"/>
</dbReference>
<dbReference type="SUPFAM" id="SSF48019">
    <property type="entry name" value="post-AAA+ oligomerization domain-like"/>
    <property type="match status" value="1"/>
</dbReference>
<protein>
    <recommendedName>
        <fullName evidence="6">DNA polymerase III subunit delta</fullName>
        <ecNumber>2.7.7.7</ecNumber>
    </recommendedName>
</protein>
<proteinExistence type="evidence at protein level"/>
<comment type="function">
    <text evidence="1">Part of the beta sliding clamp loading complex, which hydrolyzes ATP to load the beta clamp onto primed DNA to form the DNA replication pre-initiation complex. DNA polymerase III is a complex, multichain enzyme responsible for most of the replicative synthesis in bacteria. This DNA polymerase also exhibits 3'-5' exonuclease activity. The delta subunit is the wrench that will open the beta subunit dimer. The DNA clamp loading complex (tau(3),delta,delta') is thought to load beta dimers onto DNA by binding ATP which alters the complex's conformation so it can bind beta sliding clamp dimers and open them at one interface. Primed DNA is recognized, ATP is hydrolyzed releasing the clamp loading complex and closing the beta sliding clamp ring around the primed DNA.</text>
</comment>
<comment type="catalytic activity">
    <reaction>
        <text>DNA(n) + a 2'-deoxyribonucleoside 5'-triphosphate = DNA(n+1) + diphosphate</text>
        <dbReference type="Rhea" id="RHEA:22508"/>
        <dbReference type="Rhea" id="RHEA-COMP:17339"/>
        <dbReference type="Rhea" id="RHEA-COMP:17340"/>
        <dbReference type="ChEBI" id="CHEBI:33019"/>
        <dbReference type="ChEBI" id="CHEBI:61560"/>
        <dbReference type="ChEBI" id="CHEBI:173112"/>
        <dbReference type="EC" id="2.7.7.7"/>
    </reaction>
</comment>
<comment type="subunit">
    <text evidence="1 4">Component of the DNA clamp loading complex consisting of tau(3):delta(1):delta'(1) (PubMed:23525462). The DNA polymerase III holoenzyme complex contains at least 10 different subunits organized into 3 functionally essential subassemblies: the Pol III core, the beta sliding clamp processivity factor and the clamp-loading complex. The Pol III core (subunits alpha, epsilon and theta) contains the polymerase and the 3'-5' exonuclease proofreading activities. The polymerase is tethered to the template via the dimeric beta sliding clamp processivity factor. The DNA clamp-loading complex assembles the beta sliding clamp onto the primed template and plays a central role in the organization and communication at the replication fork (By similarity).</text>
</comment>
<comment type="subcellular location">
    <subcellularLocation>
        <location evidence="3">Cytoplasm</location>
        <location evidence="3">Nucleoid</location>
    </subcellularLocation>
    <text evidence="3">Localizes in tight foci to the chromosomal replication center at mid-cell; positioning does not rely on the C-terminus of SSB (ssbA) (PubMed:21170359).</text>
</comment>
<comment type="disruption phenotype">
    <text evidence="2">Essential, it cannot be disrupted (PubMed:12060778).</text>
</comment>
<comment type="similarity">
    <text evidence="9">Belongs to the DNA polymerase HolA subunit family.</text>
</comment>
<gene>
    <name evidence="5 8" type="primary">holA</name>
    <name evidence="7" type="synonym">yqeN</name>
    <name type="ordered locus">BSU25560</name>
</gene>
<accession>P54459</accession>
<keyword id="KW-0002">3D-structure</keyword>
<keyword id="KW-0963">Cytoplasm</keyword>
<keyword id="KW-0235">DNA replication</keyword>
<keyword id="KW-0239">DNA-directed DNA polymerase</keyword>
<keyword id="KW-0548">Nucleotidyltransferase</keyword>
<keyword id="KW-1185">Reference proteome</keyword>
<keyword id="KW-0808">Transferase</keyword>
<feature type="chain" id="PRO_0000049789" description="DNA polymerase III subunit delta">
    <location>
        <begin position="1"/>
        <end position="347"/>
    </location>
</feature>
<feature type="helix" evidence="11">
    <location>
        <begin position="2"/>
        <end position="10"/>
    </location>
</feature>
<feature type="strand" evidence="11">
    <location>
        <begin position="16"/>
        <end position="23"/>
    </location>
</feature>
<feature type="helix" evidence="11">
    <location>
        <begin position="25"/>
        <end position="39"/>
    </location>
</feature>
<feature type="helix" evidence="11">
    <location>
        <begin position="42"/>
        <end position="44"/>
    </location>
</feature>
<feature type="helix" evidence="11">
    <location>
        <begin position="45"/>
        <end position="48"/>
    </location>
</feature>
<feature type="strand" evidence="11">
    <location>
        <begin position="49"/>
        <end position="53"/>
    </location>
</feature>
<feature type="turn" evidence="11">
    <location>
        <begin position="54"/>
        <end position="56"/>
    </location>
</feature>
<feature type="helix" evidence="11">
    <location>
        <begin position="59"/>
        <end position="66"/>
    </location>
</feature>
<feature type="strand" evidence="11">
    <location>
        <begin position="71"/>
        <end position="74"/>
    </location>
</feature>
<feature type="strand" evidence="11">
    <location>
        <begin position="76"/>
        <end position="81"/>
    </location>
</feature>
<feature type="helix" evidence="11">
    <location>
        <begin position="84"/>
        <end position="86"/>
    </location>
</feature>
<feature type="helix" evidence="11">
    <location>
        <begin position="99"/>
        <end position="107"/>
    </location>
</feature>
<feature type="strand" evidence="11">
    <location>
        <begin position="113"/>
        <end position="119"/>
    </location>
</feature>
<feature type="helix" evidence="11">
    <location>
        <begin position="129"/>
        <end position="137"/>
    </location>
</feature>
<feature type="strand" evidence="11">
    <location>
        <begin position="138"/>
        <end position="142"/>
    </location>
</feature>
<feature type="helix" evidence="11">
    <location>
        <begin position="148"/>
        <end position="160"/>
    </location>
</feature>
<feature type="turn" evidence="11">
    <location>
        <begin position="161"/>
        <end position="163"/>
    </location>
</feature>
<feature type="helix" evidence="11">
    <location>
        <begin position="168"/>
        <end position="177"/>
    </location>
</feature>
<feature type="turn" evidence="11">
    <location>
        <begin position="178"/>
        <end position="180"/>
    </location>
</feature>
<feature type="helix" evidence="11">
    <location>
        <begin position="182"/>
        <end position="195"/>
    </location>
</feature>
<feature type="turn" evidence="11">
    <location>
        <begin position="196"/>
        <end position="198"/>
    </location>
</feature>
<feature type="helix" evidence="11">
    <location>
        <begin position="204"/>
        <end position="210"/>
    </location>
</feature>
<feature type="helix" evidence="11">
    <location>
        <begin position="215"/>
        <end position="227"/>
    </location>
</feature>
<feature type="helix" evidence="11">
    <location>
        <begin position="231"/>
        <end position="243"/>
    </location>
</feature>
<feature type="helix" evidence="11">
    <location>
        <begin position="248"/>
        <end position="269"/>
    </location>
</feature>
<feature type="turn" evidence="11">
    <location>
        <begin position="270"/>
        <end position="272"/>
    </location>
</feature>
<feature type="helix" evidence="11">
    <location>
        <begin position="275"/>
        <end position="282"/>
    </location>
</feature>
<feature type="helix" evidence="11">
    <location>
        <begin position="286"/>
        <end position="296"/>
    </location>
</feature>
<feature type="helix" evidence="11">
    <location>
        <begin position="301"/>
        <end position="319"/>
    </location>
</feature>
<feature type="helix" evidence="11">
    <location>
        <begin position="325"/>
        <end position="338"/>
    </location>
</feature>
<name>HOLA_BACSU</name>